<comment type="similarity">
    <text evidence="1">Belongs to the universal ribosomal protein uL29 family.</text>
</comment>
<keyword id="KW-1185">Reference proteome</keyword>
<keyword id="KW-0687">Ribonucleoprotein</keyword>
<keyword id="KW-0689">Ribosomal protein</keyword>
<protein>
    <recommendedName>
        <fullName evidence="1">Large ribosomal subunit protein uL29</fullName>
    </recommendedName>
    <alternativeName>
        <fullName evidence="2">50S ribosomal protein L29</fullName>
    </alternativeName>
</protein>
<gene>
    <name evidence="1" type="primary">rpmC</name>
    <name type="ordered locus">WIGBR5510</name>
</gene>
<proteinExistence type="inferred from homology"/>
<dbReference type="EMBL" id="BA000021">
    <property type="protein sequence ID" value="BAC24697.1"/>
    <property type="molecule type" value="Genomic_DNA"/>
</dbReference>
<dbReference type="SMR" id="Q8D204"/>
<dbReference type="STRING" id="36870.gene:10369060"/>
<dbReference type="KEGG" id="wbr:rpmC"/>
<dbReference type="eggNOG" id="COG0255">
    <property type="taxonomic scope" value="Bacteria"/>
</dbReference>
<dbReference type="HOGENOM" id="CLU_158491_1_2_6"/>
<dbReference type="OrthoDB" id="9815192at2"/>
<dbReference type="Proteomes" id="UP000000562">
    <property type="component" value="Chromosome"/>
</dbReference>
<dbReference type="GO" id="GO:1990904">
    <property type="term" value="C:ribonucleoprotein complex"/>
    <property type="evidence" value="ECO:0007669"/>
    <property type="project" value="UniProtKB-KW"/>
</dbReference>
<dbReference type="GO" id="GO:0005840">
    <property type="term" value="C:ribosome"/>
    <property type="evidence" value="ECO:0007669"/>
    <property type="project" value="UniProtKB-KW"/>
</dbReference>
<dbReference type="GO" id="GO:0003735">
    <property type="term" value="F:structural constituent of ribosome"/>
    <property type="evidence" value="ECO:0007669"/>
    <property type="project" value="InterPro"/>
</dbReference>
<dbReference type="GO" id="GO:0006412">
    <property type="term" value="P:translation"/>
    <property type="evidence" value="ECO:0007669"/>
    <property type="project" value="UniProtKB-UniRule"/>
</dbReference>
<dbReference type="Gene3D" id="6.10.140.1970">
    <property type="match status" value="1"/>
</dbReference>
<dbReference type="HAMAP" id="MF_00374">
    <property type="entry name" value="Ribosomal_uL29"/>
    <property type="match status" value="1"/>
</dbReference>
<dbReference type="InterPro" id="IPR001854">
    <property type="entry name" value="Ribosomal_uL29"/>
</dbReference>
<dbReference type="InterPro" id="IPR036049">
    <property type="entry name" value="Ribosomal_uL29_sf"/>
</dbReference>
<dbReference type="NCBIfam" id="TIGR00012">
    <property type="entry name" value="L29"/>
    <property type="match status" value="1"/>
</dbReference>
<dbReference type="Pfam" id="PF00831">
    <property type="entry name" value="Ribosomal_L29"/>
    <property type="match status" value="1"/>
</dbReference>
<dbReference type="SUPFAM" id="SSF46561">
    <property type="entry name" value="Ribosomal protein L29 (L29p)"/>
    <property type="match status" value="1"/>
</dbReference>
<name>RL29_WIGBR</name>
<organism>
    <name type="scientific">Wigglesworthia glossinidia brevipalpis</name>
    <dbReference type="NCBI Taxonomy" id="36870"/>
    <lineage>
        <taxon>Bacteria</taxon>
        <taxon>Pseudomonadati</taxon>
        <taxon>Pseudomonadota</taxon>
        <taxon>Gammaproteobacteria</taxon>
        <taxon>Enterobacterales</taxon>
        <taxon>Erwiniaceae</taxon>
        <taxon>Wigglesworthia</taxon>
    </lineage>
</organism>
<reference key="1">
    <citation type="journal article" date="2002" name="Nat. Genet.">
        <title>Genome sequence of the endocellular obligate symbiont of tsetse flies, Wigglesworthia glossinidia.</title>
        <authorList>
            <person name="Akman L."/>
            <person name="Yamashita A."/>
            <person name="Watanabe H."/>
            <person name="Oshima K."/>
            <person name="Shiba T."/>
            <person name="Hattori M."/>
            <person name="Aksoy S."/>
        </authorList>
    </citation>
    <scope>NUCLEOTIDE SEQUENCE [LARGE SCALE GENOMIC DNA]</scope>
</reference>
<feature type="chain" id="PRO_0000130496" description="Large ribosomal subunit protein uL29">
    <location>
        <begin position="1"/>
        <end position="68"/>
    </location>
</feature>
<sequence length="68" mass="8083">MNLKNLRKKNKKELNNELLNLLREQFNLRMQAGNGQLQHTHLLKEVRKNLAYVKMLINEEKKGRNNNG</sequence>
<accession>Q8D204</accession>
<evidence type="ECO:0000255" key="1">
    <source>
        <dbReference type="HAMAP-Rule" id="MF_00374"/>
    </source>
</evidence>
<evidence type="ECO:0000305" key="2"/>